<feature type="chain" id="PRO_0000108679" description="Ribosomal RNA small subunit methyltransferase H">
    <location>
        <begin position="1"/>
        <end position="315"/>
    </location>
</feature>
<feature type="binding site" evidence="1">
    <location>
        <begin position="35"/>
        <end position="37"/>
    </location>
    <ligand>
        <name>S-adenosyl-L-methionine</name>
        <dbReference type="ChEBI" id="CHEBI:59789"/>
    </ligand>
</feature>
<feature type="binding site" evidence="1">
    <location>
        <position position="55"/>
    </location>
    <ligand>
        <name>S-adenosyl-L-methionine</name>
        <dbReference type="ChEBI" id="CHEBI:59789"/>
    </ligand>
</feature>
<feature type="binding site" evidence="1">
    <location>
        <position position="79"/>
    </location>
    <ligand>
        <name>S-adenosyl-L-methionine</name>
        <dbReference type="ChEBI" id="CHEBI:59789"/>
    </ligand>
</feature>
<feature type="binding site" evidence="1">
    <location>
        <position position="101"/>
    </location>
    <ligand>
        <name>S-adenosyl-L-methionine</name>
        <dbReference type="ChEBI" id="CHEBI:59789"/>
    </ligand>
</feature>
<feature type="binding site" evidence="1">
    <location>
        <position position="108"/>
    </location>
    <ligand>
        <name>S-adenosyl-L-methionine</name>
        <dbReference type="ChEBI" id="CHEBI:59789"/>
    </ligand>
</feature>
<keyword id="KW-0963">Cytoplasm</keyword>
<keyword id="KW-0489">Methyltransferase</keyword>
<keyword id="KW-1185">Reference proteome</keyword>
<keyword id="KW-0698">rRNA processing</keyword>
<keyword id="KW-0949">S-adenosyl-L-methionine</keyword>
<keyword id="KW-0808">Transferase</keyword>
<gene>
    <name evidence="1" type="primary">rsmH</name>
    <name type="synonym">mraW</name>
    <name type="ordered locus">PBPRA3223</name>
</gene>
<dbReference type="EC" id="2.1.1.199" evidence="1"/>
<dbReference type="EMBL" id="CR378673">
    <property type="protein sequence ID" value="CAG21529.1"/>
    <property type="molecule type" value="Genomic_DNA"/>
</dbReference>
<dbReference type="RefSeq" id="WP_011219783.1">
    <property type="nucleotide sequence ID" value="NC_006370.1"/>
</dbReference>
<dbReference type="SMR" id="P62475"/>
<dbReference type="STRING" id="298386.PBPRA3223"/>
<dbReference type="KEGG" id="ppr:PBPRA3223"/>
<dbReference type="eggNOG" id="COG0275">
    <property type="taxonomic scope" value="Bacteria"/>
</dbReference>
<dbReference type="HOGENOM" id="CLU_038422_2_0_6"/>
<dbReference type="Proteomes" id="UP000000593">
    <property type="component" value="Chromosome 1"/>
</dbReference>
<dbReference type="GO" id="GO:0005737">
    <property type="term" value="C:cytoplasm"/>
    <property type="evidence" value="ECO:0007669"/>
    <property type="project" value="UniProtKB-SubCell"/>
</dbReference>
<dbReference type="GO" id="GO:0071424">
    <property type="term" value="F:rRNA (cytosine-N4-)-methyltransferase activity"/>
    <property type="evidence" value="ECO:0007669"/>
    <property type="project" value="UniProtKB-UniRule"/>
</dbReference>
<dbReference type="GO" id="GO:0070475">
    <property type="term" value="P:rRNA base methylation"/>
    <property type="evidence" value="ECO:0007669"/>
    <property type="project" value="UniProtKB-UniRule"/>
</dbReference>
<dbReference type="FunFam" id="1.10.150.170:FF:000001">
    <property type="entry name" value="Ribosomal RNA small subunit methyltransferase H"/>
    <property type="match status" value="1"/>
</dbReference>
<dbReference type="Gene3D" id="1.10.150.170">
    <property type="entry name" value="Putative methyltransferase TM0872, insert domain"/>
    <property type="match status" value="1"/>
</dbReference>
<dbReference type="Gene3D" id="3.40.50.150">
    <property type="entry name" value="Vaccinia Virus protein VP39"/>
    <property type="match status" value="1"/>
</dbReference>
<dbReference type="HAMAP" id="MF_01007">
    <property type="entry name" value="16SrRNA_methyltr_H"/>
    <property type="match status" value="1"/>
</dbReference>
<dbReference type="InterPro" id="IPR002903">
    <property type="entry name" value="RsmH"/>
</dbReference>
<dbReference type="InterPro" id="IPR023397">
    <property type="entry name" value="SAM-dep_MeTrfase_MraW_recog"/>
</dbReference>
<dbReference type="InterPro" id="IPR029063">
    <property type="entry name" value="SAM-dependent_MTases_sf"/>
</dbReference>
<dbReference type="NCBIfam" id="TIGR00006">
    <property type="entry name" value="16S rRNA (cytosine(1402)-N(4))-methyltransferase RsmH"/>
    <property type="match status" value="1"/>
</dbReference>
<dbReference type="PANTHER" id="PTHR11265:SF0">
    <property type="entry name" value="12S RRNA N4-METHYLCYTIDINE METHYLTRANSFERASE"/>
    <property type="match status" value="1"/>
</dbReference>
<dbReference type="PANTHER" id="PTHR11265">
    <property type="entry name" value="S-ADENOSYL-METHYLTRANSFERASE MRAW"/>
    <property type="match status" value="1"/>
</dbReference>
<dbReference type="Pfam" id="PF01795">
    <property type="entry name" value="Methyltransf_5"/>
    <property type="match status" value="1"/>
</dbReference>
<dbReference type="PIRSF" id="PIRSF004486">
    <property type="entry name" value="MraW"/>
    <property type="match status" value="1"/>
</dbReference>
<dbReference type="SUPFAM" id="SSF81799">
    <property type="entry name" value="Putative methyltransferase TM0872, insert domain"/>
    <property type="match status" value="1"/>
</dbReference>
<dbReference type="SUPFAM" id="SSF53335">
    <property type="entry name" value="S-adenosyl-L-methionine-dependent methyltransferases"/>
    <property type="match status" value="1"/>
</dbReference>
<sequence length="315" mass="34993">MSEQFEHISVLLHESVDGLAIKPDGIYIDGTFGRGGHSRLILSHLGENGRLYGIDRDPQAIAEAQTIDDPRFSIIHGPFSGMAQYMEERDLIGRVDGVLLDLGVSSPQLDDAERGFSFMRDGPLDMRMDPTSGISAAEWLAEAEADDIAWVLKEFGEERFAKRIARGIVEHRENPDKKPLTRTKELAALISDVSPFRDKHKHPATRSFQAIRIYINSELDEIETALNGAVKVLAPQGRLSVISFHSLEDRMVKRFIRKNSKGPEVPAGFPLTEDQIKALGSADLKMASKAIKPSKDELGDNKRARSSVLRLAERL</sequence>
<accession>P62475</accession>
<reference key="1">
    <citation type="journal article" date="2005" name="Science">
        <title>Life at depth: Photobacterium profundum genome sequence and expression analysis.</title>
        <authorList>
            <person name="Vezzi A."/>
            <person name="Campanaro S."/>
            <person name="D'Angelo M."/>
            <person name="Simonato F."/>
            <person name="Vitulo N."/>
            <person name="Lauro F.M."/>
            <person name="Cestaro A."/>
            <person name="Malacrida G."/>
            <person name="Simionati B."/>
            <person name="Cannata N."/>
            <person name="Romualdi C."/>
            <person name="Bartlett D.H."/>
            <person name="Valle G."/>
        </authorList>
    </citation>
    <scope>NUCLEOTIDE SEQUENCE [LARGE SCALE GENOMIC DNA]</scope>
    <source>
        <strain>ATCC BAA-1253 / SS9</strain>
    </source>
</reference>
<protein>
    <recommendedName>
        <fullName evidence="1">Ribosomal RNA small subunit methyltransferase H</fullName>
        <ecNumber evidence="1">2.1.1.199</ecNumber>
    </recommendedName>
    <alternativeName>
        <fullName evidence="1">16S rRNA m(4)C1402 methyltransferase</fullName>
    </alternativeName>
    <alternativeName>
        <fullName evidence="1">rRNA (cytosine-N(4)-)-methyltransferase RsmH</fullName>
    </alternativeName>
</protein>
<name>RSMH_PHOPR</name>
<organism>
    <name type="scientific">Photobacterium profundum (strain SS9)</name>
    <dbReference type="NCBI Taxonomy" id="298386"/>
    <lineage>
        <taxon>Bacteria</taxon>
        <taxon>Pseudomonadati</taxon>
        <taxon>Pseudomonadota</taxon>
        <taxon>Gammaproteobacteria</taxon>
        <taxon>Vibrionales</taxon>
        <taxon>Vibrionaceae</taxon>
        <taxon>Photobacterium</taxon>
    </lineage>
</organism>
<proteinExistence type="inferred from homology"/>
<comment type="function">
    <text evidence="1">Specifically methylates the N4 position of cytidine in position 1402 (C1402) of 16S rRNA.</text>
</comment>
<comment type="catalytic activity">
    <reaction evidence="1">
        <text>cytidine(1402) in 16S rRNA + S-adenosyl-L-methionine = N(4)-methylcytidine(1402) in 16S rRNA + S-adenosyl-L-homocysteine + H(+)</text>
        <dbReference type="Rhea" id="RHEA:42928"/>
        <dbReference type="Rhea" id="RHEA-COMP:10286"/>
        <dbReference type="Rhea" id="RHEA-COMP:10287"/>
        <dbReference type="ChEBI" id="CHEBI:15378"/>
        <dbReference type="ChEBI" id="CHEBI:57856"/>
        <dbReference type="ChEBI" id="CHEBI:59789"/>
        <dbReference type="ChEBI" id="CHEBI:74506"/>
        <dbReference type="ChEBI" id="CHEBI:82748"/>
        <dbReference type="EC" id="2.1.1.199"/>
    </reaction>
</comment>
<comment type="subcellular location">
    <subcellularLocation>
        <location evidence="1">Cytoplasm</location>
    </subcellularLocation>
</comment>
<comment type="similarity">
    <text evidence="1">Belongs to the methyltransferase superfamily. RsmH family.</text>
</comment>
<evidence type="ECO:0000255" key="1">
    <source>
        <dbReference type="HAMAP-Rule" id="MF_01007"/>
    </source>
</evidence>